<comment type="function">
    <text evidence="1">ATP-dependent carboxylate-amine ligase which exhibits weak glutamate--cysteine ligase activity.</text>
</comment>
<comment type="catalytic activity">
    <reaction evidence="1">
        <text>L-cysteine + L-glutamate + ATP = gamma-L-glutamyl-L-cysteine + ADP + phosphate + H(+)</text>
        <dbReference type="Rhea" id="RHEA:13285"/>
        <dbReference type="ChEBI" id="CHEBI:15378"/>
        <dbReference type="ChEBI" id="CHEBI:29985"/>
        <dbReference type="ChEBI" id="CHEBI:30616"/>
        <dbReference type="ChEBI" id="CHEBI:35235"/>
        <dbReference type="ChEBI" id="CHEBI:43474"/>
        <dbReference type="ChEBI" id="CHEBI:58173"/>
        <dbReference type="ChEBI" id="CHEBI:456216"/>
        <dbReference type="EC" id="6.3.2.2"/>
    </reaction>
</comment>
<comment type="similarity">
    <text evidence="1">Belongs to the glutamate--cysteine ligase type 2 family. YbdK subfamily.</text>
</comment>
<gene>
    <name type="ordered locus">PA14_36370</name>
</gene>
<proteinExistence type="inferred from homology"/>
<organism>
    <name type="scientific">Pseudomonas aeruginosa (strain UCBPP-PA14)</name>
    <dbReference type="NCBI Taxonomy" id="208963"/>
    <lineage>
        <taxon>Bacteria</taxon>
        <taxon>Pseudomonadati</taxon>
        <taxon>Pseudomonadota</taxon>
        <taxon>Gammaproteobacteria</taxon>
        <taxon>Pseudomonadales</taxon>
        <taxon>Pseudomonadaceae</taxon>
        <taxon>Pseudomonas</taxon>
    </lineage>
</organism>
<feature type="chain" id="PRO_0000291508" description="Putative glutamate--cysteine ligase 2">
    <location>
        <begin position="1"/>
        <end position="404"/>
    </location>
</feature>
<feature type="region of interest" description="Disordered" evidence="2">
    <location>
        <begin position="377"/>
        <end position="404"/>
    </location>
</feature>
<keyword id="KW-0067">ATP-binding</keyword>
<keyword id="KW-0436">Ligase</keyword>
<keyword id="KW-0547">Nucleotide-binding</keyword>
<accession>Q02LX5</accession>
<reference key="1">
    <citation type="journal article" date="2006" name="Genome Biol.">
        <title>Genomic analysis reveals that Pseudomonas aeruginosa virulence is combinatorial.</title>
        <authorList>
            <person name="Lee D.G."/>
            <person name="Urbach J.M."/>
            <person name="Wu G."/>
            <person name="Liberati N.T."/>
            <person name="Feinbaum R.L."/>
            <person name="Miyata S."/>
            <person name="Diggins L.T."/>
            <person name="He J."/>
            <person name="Saucier M."/>
            <person name="Deziel E."/>
            <person name="Friedman L."/>
            <person name="Li L."/>
            <person name="Grills G."/>
            <person name="Montgomery K."/>
            <person name="Kucherlapati R."/>
            <person name="Rahme L.G."/>
            <person name="Ausubel F.M."/>
        </authorList>
    </citation>
    <scope>NUCLEOTIDE SEQUENCE [LARGE SCALE GENOMIC DNA]</scope>
    <source>
        <strain>UCBPP-PA14</strain>
    </source>
</reference>
<dbReference type="EC" id="6.3.2.2" evidence="1"/>
<dbReference type="EMBL" id="CP000438">
    <property type="protein sequence ID" value="ABJ11359.1"/>
    <property type="molecule type" value="Genomic_DNA"/>
</dbReference>
<dbReference type="RefSeq" id="WP_009315730.1">
    <property type="nucleotide sequence ID" value="NZ_CP034244.1"/>
</dbReference>
<dbReference type="SMR" id="Q02LX5"/>
<dbReference type="KEGG" id="pau:PA14_36370"/>
<dbReference type="PseudoCAP" id="PA14_36370"/>
<dbReference type="HOGENOM" id="CLU_044848_0_1_6"/>
<dbReference type="BioCyc" id="PAER208963:G1G74-3056-MONOMER"/>
<dbReference type="Proteomes" id="UP000000653">
    <property type="component" value="Chromosome"/>
</dbReference>
<dbReference type="GO" id="GO:0005524">
    <property type="term" value="F:ATP binding"/>
    <property type="evidence" value="ECO:0007669"/>
    <property type="project" value="UniProtKB-KW"/>
</dbReference>
<dbReference type="GO" id="GO:0004357">
    <property type="term" value="F:glutamate-cysteine ligase activity"/>
    <property type="evidence" value="ECO:0007669"/>
    <property type="project" value="UniProtKB-EC"/>
</dbReference>
<dbReference type="GO" id="GO:0042398">
    <property type="term" value="P:modified amino acid biosynthetic process"/>
    <property type="evidence" value="ECO:0007669"/>
    <property type="project" value="InterPro"/>
</dbReference>
<dbReference type="FunFam" id="3.30.590.20:FF:000008">
    <property type="entry name" value="Putative glutamate--cysteine ligase 2"/>
    <property type="match status" value="1"/>
</dbReference>
<dbReference type="Gene3D" id="3.30.590.20">
    <property type="match status" value="1"/>
</dbReference>
<dbReference type="HAMAP" id="MF_01609">
    <property type="entry name" value="Glu_cys_ligase_2"/>
    <property type="match status" value="1"/>
</dbReference>
<dbReference type="InterPro" id="IPR050141">
    <property type="entry name" value="GCL_type2/YbdK_subfam"/>
</dbReference>
<dbReference type="InterPro" id="IPR006336">
    <property type="entry name" value="GCS2"/>
</dbReference>
<dbReference type="InterPro" id="IPR014746">
    <property type="entry name" value="Gln_synth/guanido_kin_cat_dom"/>
</dbReference>
<dbReference type="InterPro" id="IPR011793">
    <property type="entry name" value="YbdK"/>
</dbReference>
<dbReference type="NCBIfam" id="TIGR02050">
    <property type="entry name" value="gshA_cyan_rel"/>
    <property type="match status" value="1"/>
</dbReference>
<dbReference type="NCBIfam" id="NF010039">
    <property type="entry name" value="PRK13515.1"/>
    <property type="match status" value="1"/>
</dbReference>
<dbReference type="PANTHER" id="PTHR36510">
    <property type="entry name" value="GLUTAMATE--CYSTEINE LIGASE 2-RELATED"/>
    <property type="match status" value="1"/>
</dbReference>
<dbReference type="PANTHER" id="PTHR36510:SF1">
    <property type="entry name" value="GLUTAMATE--CYSTEINE LIGASE 2-RELATED"/>
    <property type="match status" value="1"/>
</dbReference>
<dbReference type="Pfam" id="PF04107">
    <property type="entry name" value="GCS2"/>
    <property type="match status" value="1"/>
</dbReference>
<dbReference type="SUPFAM" id="SSF55931">
    <property type="entry name" value="Glutamine synthetase/guanido kinase"/>
    <property type="match status" value="1"/>
</dbReference>
<sequence>MTHDLAASGLRFGIEEEFFLLDASDLDIVRSAPAGFVAACRDTLGEHFAEEMFECQVEVASPVFSTLAEAARFHGQARQRLAHLAMDFGLRSLCVGTHPFADWRRARSNPAAHFARLFEDQGRVARRSLVCGLHVHVEIPPSHDRMAVLQRVLPWLPLLLALSASSPFRGGRRSGLASYRRALCGEWPRMNIPPALPDEDAYRRHLALLREAGCIREDGQVWWMIRPSSHVPTLELRICDACPRLADALSLAGLFRALVGEALGAGPRTLPVARDACLEENYWQALRYGCAGRYLVGGRAVGAGDWLEMAWRQCRPQARQGNEWAYEHARGLLGETSASRQLRRYQTLRAAGQERHVALRRLVEELLEENLQPALAGPAGKRAHEGGRSFRPAAGAPMSIRGQE</sequence>
<evidence type="ECO:0000255" key="1">
    <source>
        <dbReference type="HAMAP-Rule" id="MF_01609"/>
    </source>
</evidence>
<evidence type="ECO:0000256" key="2">
    <source>
        <dbReference type="SAM" id="MobiDB-lite"/>
    </source>
</evidence>
<name>GCS2_PSEAB</name>
<protein>
    <recommendedName>
        <fullName evidence="1">Putative glutamate--cysteine ligase 2</fullName>
        <ecNumber evidence="1">6.3.2.2</ecNumber>
    </recommendedName>
    <alternativeName>
        <fullName evidence="1">Gamma-glutamylcysteine synthetase 2</fullName>
        <shortName evidence="1">GCS 2</shortName>
        <shortName evidence="1">Gamma-GCS 2</shortName>
    </alternativeName>
</protein>